<reference key="1">
    <citation type="journal article" date="2001" name="Science">
        <title>Complete genome sequence of a virulent isolate of Streptococcus pneumoniae.</title>
        <authorList>
            <person name="Tettelin H."/>
            <person name="Nelson K.E."/>
            <person name="Paulsen I.T."/>
            <person name="Eisen J.A."/>
            <person name="Read T.D."/>
            <person name="Peterson S.N."/>
            <person name="Heidelberg J.F."/>
            <person name="DeBoy R.T."/>
            <person name="Haft D.H."/>
            <person name="Dodson R.J."/>
            <person name="Durkin A.S."/>
            <person name="Gwinn M.L."/>
            <person name="Kolonay J.F."/>
            <person name="Nelson W.C."/>
            <person name="Peterson J.D."/>
            <person name="Umayam L.A."/>
            <person name="White O."/>
            <person name="Salzberg S.L."/>
            <person name="Lewis M.R."/>
            <person name="Radune D."/>
            <person name="Holtzapple E.K."/>
            <person name="Khouri H.M."/>
            <person name="Wolf A.M."/>
            <person name="Utterback T.R."/>
            <person name="Hansen C.L."/>
            <person name="McDonald L.A."/>
            <person name="Feldblyum T.V."/>
            <person name="Angiuoli S.V."/>
            <person name="Dickinson T."/>
            <person name="Hickey E.K."/>
            <person name="Holt I.E."/>
            <person name="Loftus B.J."/>
            <person name="Yang F."/>
            <person name="Smith H.O."/>
            <person name="Venter J.C."/>
            <person name="Dougherty B.A."/>
            <person name="Morrison D.A."/>
            <person name="Hollingshead S.K."/>
            <person name="Fraser C.M."/>
        </authorList>
    </citation>
    <scope>NUCLEOTIDE SEQUENCE [LARGE SCALE GENOMIC DNA]</scope>
    <source>
        <strain>ATCC BAA-334 / TIGR4</strain>
    </source>
</reference>
<accession>O05703</accession>
<accession>Q97N86</accession>
<proteinExistence type="inferred from homology"/>
<sequence>MKKISLLLASLCALFLVACSNQKQADGKLNIVTTFYPVYEFTKQVAGDTANVELLIGAGTEPHEYEPSAKAVAKIQDADTFVYENENMETWVPKLLDTLDKKKVKTIKATGDMLLLPGGEEEEGDHDHGEEGHHHEFDPHVWLSPVRAIKLVEHIRDSLSADYPDKKETFEKNAAAYIEKLQALDKAYAEGLSQAKQKSFVTQHAAFNYLALDYGLKQVAISGLSPDAEPSAARLAELTEYVKKNKIAYIYFEENASQALANTLSKEAGVKTDVLNPLESLTEEDTKAGENYISVMEKNLKALKQTTDQEGPAIEPEKAEDTKTVQNGYFEDAAVKDRTLSDYAGNWQSVYPFLEDGTFDQVFDYKAKLTGKMTQAEYKAYYTKGYHTDVTKINITDNTMEFVQGGQSKKYTYKYVGKKILTYKKGNRGVRFLFEATDADAGQFKYVQFSDHNVAPVKAEHFHIFFGGTSQEALFEEMDNWPTYYPDNLSGQEIAQEMLAH</sequence>
<organism>
    <name type="scientific">Streptococcus pneumoniae serotype 4 (strain ATCC BAA-334 / TIGR4)</name>
    <dbReference type="NCBI Taxonomy" id="170187"/>
    <lineage>
        <taxon>Bacteria</taxon>
        <taxon>Bacillati</taxon>
        <taxon>Bacillota</taxon>
        <taxon>Bacilli</taxon>
        <taxon>Lactobacillales</taxon>
        <taxon>Streptococcaceae</taxon>
        <taxon>Streptococcus</taxon>
    </lineage>
</organism>
<feature type="signal peptide" evidence="4">
    <location>
        <begin position="1"/>
        <end position="18"/>
    </location>
</feature>
<feature type="chain" id="PRO_0000031866" description="Zinc-binding lipoprotein AdcA">
    <location>
        <begin position="19"/>
        <end position="501"/>
    </location>
</feature>
<feature type="region of interest" description="Disordered" evidence="3">
    <location>
        <begin position="116"/>
        <end position="136"/>
    </location>
</feature>
<feature type="region of interest" description="His-rich loop" evidence="1">
    <location>
        <begin position="120"/>
        <end position="136"/>
    </location>
</feature>
<feature type="compositionally biased region" description="Basic and acidic residues" evidence="3">
    <location>
        <begin position="125"/>
        <end position="136"/>
    </location>
</feature>
<feature type="binding site" evidence="1">
    <location>
        <position position="63"/>
    </location>
    <ligand>
        <name>Zn(2+)</name>
        <dbReference type="ChEBI" id="CHEBI:29105"/>
    </ligand>
</feature>
<feature type="binding site" evidence="1">
    <location>
        <position position="140"/>
    </location>
    <ligand>
        <name>Zn(2+)</name>
        <dbReference type="ChEBI" id="CHEBI:29105"/>
    </ligand>
</feature>
<feature type="binding site" evidence="1">
    <location>
        <position position="204"/>
    </location>
    <ligand>
        <name>Zn(2+)</name>
        <dbReference type="ChEBI" id="CHEBI:29105"/>
    </ligand>
</feature>
<feature type="binding site" evidence="1">
    <location>
        <position position="279"/>
    </location>
    <ligand>
        <name>Zn(2+)</name>
        <dbReference type="ChEBI" id="CHEBI:29105"/>
    </ligand>
</feature>
<feature type="lipid moiety-binding region" description="N-palmitoyl cysteine" evidence="2">
    <location>
        <position position="19"/>
    </location>
</feature>
<feature type="lipid moiety-binding region" description="S-diacylglycerol cysteine" evidence="2">
    <location>
        <position position="19"/>
    </location>
</feature>
<name>ADCA_STRPN</name>
<protein>
    <recommendedName>
        <fullName>Zinc-binding lipoprotein AdcA</fullName>
    </recommendedName>
</protein>
<gene>
    <name type="primary">adcA</name>
    <name type="ordered locus">SP_2169</name>
</gene>
<dbReference type="EMBL" id="AE005672">
    <property type="protein sequence ID" value="AAK76223.1"/>
    <property type="molecule type" value="Genomic_DNA"/>
</dbReference>
<dbReference type="PIR" id="F95253">
    <property type="entry name" value="F95253"/>
</dbReference>
<dbReference type="PIR" id="T46756">
    <property type="entry name" value="T46756"/>
</dbReference>
<dbReference type="RefSeq" id="WP_000724057.1">
    <property type="nucleotide sequence ID" value="NZ_CP155539.1"/>
</dbReference>
<dbReference type="SMR" id="O05703"/>
<dbReference type="TCDB" id="3.A.1.15.3">
    <property type="family name" value="the atp-binding cassette (abc) superfamily"/>
</dbReference>
<dbReference type="PaxDb" id="170187-SP_2169"/>
<dbReference type="EnsemblBacteria" id="AAK76223">
    <property type="protein sequence ID" value="AAK76223"/>
    <property type="gene ID" value="SP_2169"/>
</dbReference>
<dbReference type="KEGG" id="spn:SP_2169"/>
<dbReference type="eggNOG" id="COG0803">
    <property type="taxonomic scope" value="Bacteria"/>
</dbReference>
<dbReference type="eggNOG" id="COG3443">
    <property type="taxonomic scope" value="Bacteria"/>
</dbReference>
<dbReference type="PhylomeDB" id="O05703"/>
<dbReference type="BioCyc" id="SPNE170187:G1FZB-2264-MONOMER"/>
<dbReference type="Proteomes" id="UP000000585">
    <property type="component" value="Chromosome"/>
</dbReference>
<dbReference type="GO" id="GO:0005886">
    <property type="term" value="C:plasma membrane"/>
    <property type="evidence" value="ECO:0007669"/>
    <property type="project" value="UniProtKB-SubCell"/>
</dbReference>
<dbReference type="GO" id="GO:0008270">
    <property type="term" value="F:zinc ion binding"/>
    <property type="evidence" value="ECO:0007669"/>
    <property type="project" value="InterPro"/>
</dbReference>
<dbReference type="GO" id="GO:0007155">
    <property type="term" value="P:cell adhesion"/>
    <property type="evidence" value="ECO:0007669"/>
    <property type="project" value="InterPro"/>
</dbReference>
<dbReference type="GO" id="GO:0030420">
    <property type="term" value="P:establishment of competence for transformation"/>
    <property type="evidence" value="ECO:0007669"/>
    <property type="project" value="UniProtKB-KW"/>
</dbReference>
<dbReference type="GO" id="GO:0006829">
    <property type="term" value="P:zinc ion transport"/>
    <property type="evidence" value="ECO:0007669"/>
    <property type="project" value="UniProtKB-KW"/>
</dbReference>
<dbReference type="CDD" id="cd01017">
    <property type="entry name" value="AdcA"/>
    <property type="match status" value="1"/>
</dbReference>
<dbReference type="Gene3D" id="2.40.128.20">
    <property type="match status" value="1"/>
</dbReference>
<dbReference type="Gene3D" id="3.40.50.1980">
    <property type="entry name" value="Nitrogenase molybdenum iron protein domain"/>
    <property type="match status" value="2"/>
</dbReference>
<dbReference type="InterPro" id="IPR006129">
    <property type="entry name" value="AdhesinB"/>
</dbReference>
<dbReference type="InterPro" id="IPR050492">
    <property type="entry name" value="Bact_metal-bind_prot9"/>
</dbReference>
<dbReference type="InterPro" id="IPR012674">
    <property type="entry name" value="Calycin"/>
</dbReference>
<dbReference type="InterPro" id="IPR006128">
    <property type="entry name" value="Lipoprotein_PsaA-like"/>
</dbReference>
<dbReference type="InterPro" id="IPR015304">
    <property type="entry name" value="ZinT_dom"/>
</dbReference>
<dbReference type="InterPro" id="IPR006127">
    <property type="entry name" value="ZnuA-like"/>
</dbReference>
<dbReference type="PANTHER" id="PTHR42953:SF3">
    <property type="entry name" value="HIGH-AFFINITY ZINC UPTAKE SYSTEM PROTEIN ZNUA"/>
    <property type="match status" value="1"/>
</dbReference>
<dbReference type="PANTHER" id="PTHR42953">
    <property type="entry name" value="HIGH-AFFINITY ZINC UPTAKE SYSTEM PROTEIN ZNUA-RELATED"/>
    <property type="match status" value="1"/>
</dbReference>
<dbReference type="Pfam" id="PF09223">
    <property type="entry name" value="ZinT"/>
    <property type="match status" value="1"/>
</dbReference>
<dbReference type="Pfam" id="PF01297">
    <property type="entry name" value="ZnuA"/>
    <property type="match status" value="1"/>
</dbReference>
<dbReference type="PRINTS" id="PR00691">
    <property type="entry name" value="ADHESINB"/>
</dbReference>
<dbReference type="PRINTS" id="PR00690">
    <property type="entry name" value="ADHESNFAMILY"/>
</dbReference>
<dbReference type="SUPFAM" id="SSF53807">
    <property type="entry name" value="Helical backbone' metal receptor"/>
    <property type="match status" value="1"/>
</dbReference>
<dbReference type="SUPFAM" id="SSF50814">
    <property type="entry name" value="Lipocalins"/>
    <property type="match status" value="1"/>
</dbReference>
<dbReference type="PROSITE" id="PS51257">
    <property type="entry name" value="PROKAR_LIPOPROTEIN"/>
    <property type="match status" value="1"/>
</dbReference>
<evidence type="ECO:0000250" key="1">
    <source>
        <dbReference type="UniProtKB" id="Q8CWN2"/>
    </source>
</evidence>
<evidence type="ECO:0000255" key="2">
    <source>
        <dbReference type="PROSITE-ProRule" id="PRU00303"/>
    </source>
</evidence>
<evidence type="ECO:0000256" key="3">
    <source>
        <dbReference type="SAM" id="MobiDB-lite"/>
    </source>
</evidence>
<evidence type="ECO:0000305" key="4"/>
<keyword id="KW-1003">Cell membrane</keyword>
<keyword id="KW-0178">Competence</keyword>
<keyword id="KW-0406">Ion transport</keyword>
<keyword id="KW-0449">Lipoprotein</keyword>
<keyword id="KW-0472">Membrane</keyword>
<keyword id="KW-0479">Metal-binding</keyword>
<keyword id="KW-0564">Palmitate</keyword>
<keyword id="KW-1185">Reference proteome</keyword>
<keyword id="KW-0732">Signal</keyword>
<keyword id="KW-0813">Transport</keyword>
<keyword id="KW-0862">Zinc</keyword>
<keyword id="KW-0864">Zinc transport</keyword>
<comment type="function">
    <text evidence="1">Part of the ATP-binding cassette (ABC) transport system AdcABC involved in zinc import (By similarity). Binds zinc with high affinity and specificity and delivers it to the membrane permease for translocation into the cytoplasm (By similarity).</text>
</comment>
<comment type="subcellular location">
    <subcellularLocation>
        <location evidence="2">Cell membrane</location>
        <topology evidence="2">Lipid-anchor</topology>
    </subcellularLocation>
</comment>
<comment type="domain">
    <text evidence="1">The His-rich loop facilitates the closure of the zinc binding site and is required for zinc acquisition.</text>
</comment>
<comment type="similarity">
    <text evidence="4">Belongs to the bacterial solute-binding protein 9 family.</text>
</comment>